<protein>
    <recommendedName>
        <fullName evidence="7">SH3 domain-containing protein 1</fullName>
    </recommendedName>
</protein>
<feature type="chain" id="PRO_0000434150" description="SH3 domain-containing protein 1">
    <location>
        <begin position="1"/>
        <end position="439"/>
    </location>
</feature>
<feature type="domain" description="BAR" evidence="2">
    <location>
        <begin position="32"/>
        <end position="263"/>
    </location>
</feature>
<feature type="domain" description="SH3" evidence="1">
    <location>
        <begin position="366"/>
        <end position="425"/>
    </location>
</feature>
<feature type="region of interest" description="Disordered" evidence="3">
    <location>
        <begin position="277"/>
        <end position="362"/>
    </location>
</feature>
<feature type="compositionally biased region" description="Polar residues" evidence="3">
    <location>
        <begin position="277"/>
        <end position="291"/>
    </location>
</feature>
<feature type="compositionally biased region" description="Basic and acidic residues" evidence="3">
    <location>
        <begin position="318"/>
        <end position="358"/>
    </location>
</feature>
<organism evidence="8">
    <name type="scientific">Arabidopsis thaliana</name>
    <name type="common">Mouse-ear cress</name>
    <dbReference type="NCBI Taxonomy" id="3702"/>
    <lineage>
        <taxon>Eukaryota</taxon>
        <taxon>Viridiplantae</taxon>
        <taxon>Streptophyta</taxon>
        <taxon>Embryophyta</taxon>
        <taxon>Tracheophyta</taxon>
        <taxon>Spermatophyta</taxon>
        <taxon>Magnoliopsida</taxon>
        <taxon>eudicotyledons</taxon>
        <taxon>Gunneridae</taxon>
        <taxon>Pentapetalae</taxon>
        <taxon>rosids</taxon>
        <taxon>malvids</taxon>
        <taxon>Brassicales</taxon>
        <taxon>Brassicaceae</taxon>
        <taxon>Camelineae</taxon>
        <taxon>Arabidopsis</taxon>
    </lineage>
</organism>
<sequence>MEAIRKQAAKLREQVARQQQAVLKHLGHVNADAVVVDEEELHCHQKLQDLYSSTKAAKRLQRNIVRGLEGFIATGTKVVEIGLKFAEDFKKYGDENPDANTPLSRVAHHFGTSYKSVEGERETLLGVLSEQVCEPIRTMIYSAPLEDARHLVNHYDRLRQEVEAQATDVLRRRSKLKESDISEEAYIKLKNSESRLAELKSSMKTLGKEATKAMLEVDDQQQNVTSQRLRALVEAERSYHRNALDILDKLHSEMIAEEEAIGSSPKSLPLHIEDSASLPQQEPNSNSSGEIKSNPLGKIKASRREEIKSNPQEVTKPSPKDEMKSSPQEETKSNHQKEIKSSPQEEIKKSNGSDDHHNHQLLSQNDSYFLAKVVHPFDAQAPGELSLAVDDYVIVRQVAGTGWSEGEYKGKAGWFPSAYVEKQEKAPASKIVESNSKQQ</sequence>
<reference key="1">
    <citation type="journal article" date="2001" name="Plant Cell">
        <title>Role of SH3 domain-containing proteins in clathrin-mediated vesicle trafficking in Arabidopsis.</title>
        <authorList>
            <person name="Lam B.C.-H."/>
            <person name="Sage T.L."/>
            <person name="Bianchi F."/>
            <person name="Blumwald E."/>
        </authorList>
    </citation>
    <scope>NUCLEOTIDE SEQUENCE [MRNA]</scope>
    <scope>FUNCTION</scope>
    <scope>TISSUE SPECIFICITY</scope>
    <scope>SUBCELLULAR LOCATION</scope>
    <scope>INTERACTION WITH AUXI1</scope>
</reference>
<reference key="2">
    <citation type="journal article" date="2000" name="Nature">
        <title>Sequence and analysis of chromosome 1 of the plant Arabidopsis thaliana.</title>
        <authorList>
            <person name="Theologis A."/>
            <person name="Ecker J.R."/>
            <person name="Palm C.J."/>
            <person name="Federspiel N.A."/>
            <person name="Kaul S."/>
            <person name="White O."/>
            <person name="Alonso J."/>
            <person name="Altafi H."/>
            <person name="Araujo R."/>
            <person name="Bowman C.L."/>
            <person name="Brooks S.Y."/>
            <person name="Buehler E."/>
            <person name="Chan A."/>
            <person name="Chao Q."/>
            <person name="Chen H."/>
            <person name="Cheuk R.F."/>
            <person name="Chin C.W."/>
            <person name="Chung M.K."/>
            <person name="Conn L."/>
            <person name="Conway A.B."/>
            <person name="Conway A.R."/>
            <person name="Creasy T.H."/>
            <person name="Dewar K."/>
            <person name="Dunn P."/>
            <person name="Etgu P."/>
            <person name="Feldblyum T.V."/>
            <person name="Feng J.-D."/>
            <person name="Fong B."/>
            <person name="Fujii C.Y."/>
            <person name="Gill J.E."/>
            <person name="Goldsmith A.D."/>
            <person name="Haas B."/>
            <person name="Hansen N.F."/>
            <person name="Hughes B."/>
            <person name="Huizar L."/>
            <person name="Hunter J.L."/>
            <person name="Jenkins J."/>
            <person name="Johnson-Hopson C."/>
            <person name="Khan S."/>
            <person name="Khaykin E."/>
            <person name="Kim C.J."/>
            <person name="Koo H.L."/>
            <person name="Kremenetskaia I."/>
            <person name="Kurtz D.B."/>
            <person name="Kwan A."/>
            <person name="Lam B."/>
            <person name="Langin-Hooper S."/>
            <person name="Lee A."/>
            <person name="Lee J.M."/>
            <person name="Lenz C.A."/>
            <person name="Li J.H."/>
            <person name="Li Y.-P."/>
            <person name="Lin X."/>
            <person name="Liu S.X."/>
            <person name="Liu Z.A."/>
            <person name="Luros J.S."/>
            <person name="Maiti R."/>
            <person name="Marziali A."/>
            <person name="Militscher J."/>
            <person name="Miranda M."/>
            <person name="Nguyen M."/>
            <person name="Nierman W.C."/>
            <person name="Osborne B.I."/>
            <person name="Pai G."/>
            <person name="Peterson J."/>
            <person name="Pham P.K."/>
            <person name="Rizzo M."/>
            <person name="Rooney T."/>
            <person name="Rowley D."/>
            <person name="Sakano H."/>
            <person name="Salzberg S.L."/>
            <person name="Schwartz J.R."/>
            <person name="Shinn P."/>
            <person name="Southwick A.M."/>
            <person name="Sun H."/>
            <person name="Tallon L.J."/>
            <person name="Tambunga G."/>
            <person name="Toriumi M.J."/>
            <person name="Town C.D."/>
            <person name="Utterback T."/>
            <person name="Van Aken S."/>
            <person name="Vaysberg M."/>
            <person name="Vysotskaia V.S."/>
            <person name="Walker M."/>
            <person name="Wu D."/>
            <person name="Yu G."/>
            <person name="Fraser C.M."/>
            <person name="Venter J.C."/>
            <person name="Davis R.W."/>
        </authorList>
    </citation>
    <scope>NUCLEOTIDE SEQUENCE [LARGE SCALE GENOMIC DNA]</scope>
    <source>
        <strain>cv. Columbia</strain>
    </source>
</reference>
<reference key="3">
    <citation type="journal article" date="2017" name="Plant J.">
        <title>Araport11: a complete reannotation of the Arabidopsis thaliana reference genome.</title>
        <authorList>
            <person name="Cheng C.Y."/>
            <person name="Krishnakumar V."/>
            <person name="Chan A.P."/>
            <person name="Thibaud-Nissen F."/>
            <person name="Schobel S."/>
            <person name="Town C.D."/>
        </authorList>
    </citation>
    <scope>GENOME REANNOTATION</scope>
    <source>
        <strain>cv. Columbia</strain>
    </source>
</reference>
<reference key="4">
    <citation type="journal article" date="2003" name="Science">
        <title>Empirical analysis of transcriptional activity in the Arabidopsis genome.</title>
        <authorList>
            <person name="Yamada K."/>
            <person name="Lim J."/>
            <person name="Dale J.M."/>
            <person name="Chen H."/>
            <person name="Shinn P."/>
            <person name="Palm C.J."/>
            <person name="Southwick A.M."/>
            <person name="Wu H.C."/>
            <person name="Kim C.J."/>
            <person name="Nguyen M."/>
            <person name="Pham P.K."/>
            <person name="Cheuk R.F."/>
            <person name="Karlin-Newmann G."/>
            <person name="Liu S.X."/>
            <person name="Lam B."/>
            <person name="Sakano H."/>
            <person name="Wu T."/>
            <person name="Yu G."/>
            <person name="Miranda M."/>
            <person name="Quach H.L."/>
            <person name="Tripp M."/>
            <person name="Chang C.H."/>
            <person name="Lee J.M."/>
            <person name="Toriumi M.J."/>
            <person name="Chan M.M."/>
            <person name="Tang C.C."/>
            <person name="Onodera C.S."/>
            <person name="Deng J.M."/>
            <person name="Akiyama K."/>
            <person name="Ansari Y."/>
            <person name="Arakawa T."/>
            <person name="Banh J."/>
            <person name="Banno F."/>
            <person name="Bowser L."/>
            <person name="Brooks S.Y."/>
            <person name="Carninci P."/>
            <person name="Chao Q."/>
            <person name="Choy N."/>
            <person name="Enju A."/>
            <person name="Goldsmith A.D."/>
            <person name="Gurjal M."/>
            <person name="Hansen N.F."/>
            <person name="Hayashizaki Y."/>
            <person name="Johnson-Hopson C."/>
            <person name="Hsuan V.W."/>
            <person name="Iida K."/>
            <person name="Karnes M."/>
            <person name="Khan S."/>
            <person name="Koesema E."/>
            <person name="Ishida J."/>
            <person name="Jiang P.X."/>
            <person name="Jones T."/>
            <person name="Kawai J."/>
            <person name="Kamiya A."/>
            <person name="Meyers C."/>
            <person name="Nakajima M."/>
            <person name="Narusaka M."/>
            <person name="Seki M."/>
            <person name="Sakurai T."/>
            <person name="Satou M."/>
            <person name="Tamse R."/>
            <person name="Vaysberg M."/>
            <person name="Wallender E.K."/>
            <person name="Wong C."/>
            <person name="Yamamura Y."/>
            <person name="Yuan S."/>
            <person name="Shinozaki K."/>
            <person name="Davis R.W."/>
            <person name="Theologis A."/>
            <person name="Ecker J.R."/>
        </authorList>
    </citation>
    <scope>NUCLEOTIDE SEQUENCE [LARGE SCALE MRNA]</scope>
    <source>
        <strain>cv. Columbia</strain>
    </source>
</reference>
<reference key="5">
    <citation type="journal article" date="2009" name="Plant Physiol.">
        <title>Large-scale Arabidopsis phosphoproteome profiling reveals novel chloroplast kinase substrates and phosphorylation networks.</title>
        <authorList>
            <person name="Reiland S."/>
            <person name="Messerli G."/>
            <person name="Baerenfaller K."/>
            <person name="Gerrits B."/>
            <person name="Endler A."/>
            <person name="Grossmann J."/>
            <person name="Gruissem W."/>
            <person name="Baginsky S."/>
        </authorList>
    </citation>
    <scope>IDENTIFICATION BY MASS SPECTROMETRY [LARGE SCALE ANALYSIS]</scope>
</reference>
<evidence type="ECO:0000255" key="1">
    <source>
        <dbReference type="PROSITE-ProRule" id="PRU00192"/>
    </source>
</evidence>
<evidence type="ECO:0000255" key="2">
    <source>
        <dbReference type="PROSITE-ProRule" id="PRU00361"/>
    </source>
</evidence>
<evidence type="ECO:0000256" key="3">
    <source>
        <dbReference type="SAM" id="MobiDB-lite"/>
    </source>
</evidence>
<evidence type="ECO:0000269" key="4">
    <source>
    </source>
</evidence>
<evidence type="ECO:0000312" key="5">
    <source>
        <dbReference type="Araport" id="AT1G31440"/>
    </source>
</evidence>
<evidence type="ECO:0000312" key="6">
    <source>
        <dbReference type="EMBL" id="AAG51264.1"/>
    </source>
</evidence>
<evidence type="ECO:0000312" key="7">
    <source>
        <dbReference type="EMBL" id="AAL32438.1"/>
    </source>
</evidence>
<evidence type="ECO:0000312" key="8">
    <source>
        <dbReference type="Proteomes" id="UP000006548"/>
    </source>
</evidence>
<keyword id="KW-1003">Cell membrane</keyword>
<keyword id="KW-0175">Coiled coil</keyword>
<keyword id="KW-0968">Cytoplasmic vesicle</keyword>
<keyword id="KW-0256">Endoplasmic reticulum</keyword>
<keyword id="KW-0333">Golgi apparatus</keyword>
<keyword id="KW-0472">Membrane</keyword>
<keyword id="KW-1185">Reference proteome</keyword>
<keyword id="KW-0728">SH3 domain</keyword>
<dbReference type="EMBL" id="AF367773">
    <property type="protein sequence ID" value="AAL32438.1"/>
    <property type="molecule type" value="mRNA"/>
</dbReference>
<dbReference type="EMBL" id="AC027135">
    <property type="protein sequence ID" value="AAG51264.1"/>
    <property type="molecule type" value="Genomic_DNA"/>
</dbReference>
<dbReference type="EMBL" id="CP002684">
    <property type="protein sequence ID" value="AEE31356.1"/>
    <property type="molecule type" value="Genomic_DNA"/>
</dbReference>
<dbReference type="EMBL" id="AY080835">
    <property type="protein sequence ID" value="AAL87310.1"/>
    <property type="molecule type" value="mRNA"/>
</dbReference>
<dbReference type="EMBL" id="AY113984">
    <property type="protein sequence ID" value="AAM45032.1"/>
    <property type="molecule type" value="mRNA"/>
</dbReference>
<dbReference type="PIR" id="D86440">
    <property type="entry name" value="D86440"/>
</dbReference>
<dbReference type="RefSeq" id="NP_174429.1">
    <property type="nucleotide sequence ID" value="NM_102883.5"/>
</dbReference>
<dbReference type="SMR" id="Q9C865"/>
<dbReference type="FunCoup" id="Q9C865">
    <property type="interactions" value="1820"/>
</dbReference>
<dbReference type="IntAct" id="Q9C865">
    <property type="interactions" value="2"/>
</dbReference>
<dbReference type="STRING" id="3702.Q9C865"/>
<dbReference type="iPTMnet" id="Q9C865"/>
<dbReference type="MetOSite" id="Q9C865"/>
<dbReference type="PaxDb" id="3702-AT1G31440.1"/>
<dbReference type="ProteomicsDB" id="234509"/>
<dbReference type="EnsemblPlants" id="AT1G31440.1">
    <property type="protein sequence ID" value="AT1G31440.1"/>
    <property type="gene ID" value="AT1G31440"/>
</dbReference>
<dbReference type="GeneID" id="840034"/>
<dbReference type="Gramene" id="AT1G31440.1">
    <property type="protein sequence ID" value="AT1G31440.1"/>
    <property type="gene ID" value="AT1G31440"/>
</dbReference>
<dbReference type="KEGG" id="ath:AT1G31440"/>
<dbReference type="Araport" id="AT1G31440"/>
<dbReference type="TAIR" id="AT1G31440">
    <property type="gene designation" value="SH3P1"/>
</dbReference>
<dbReference type="eggNOG" id="ENOG502QU26">
    <property type="taxonomic scope" value="Eukaryota"/>
</dbReference>
<dbReference type="HOGENOM" id="CLU_045749_0_0_1"/>
<dbReference type="InParanoid" id="Q9C865"/>
<dbReference type="OMA" id="EMKSSPQ"/>
<dbReference type="PhylomeDB" id="Q9C865"/>
<dbReference type="CD-CODE" id="4299E36E">
    <property type="entry name" value="Nucleolus"/>
</dbReference>
<dbReference type="PRO" id="PR:Q9C865"/>
<dbReference type="Proteomes" id="UP000006548">
    <property type="component" value="Chromosome 1"/>
</dbReference>
<dbReference type="ExpressionAtlas" id="Q9C865">
    <property type="expression patterns" value="baseline and differential"/>
</dbReference>
<dbReference type="GO" id="GO:0030136">
    <property type="term" value="C:clathrin-coated vesicle"/>
    <property type="evidence" value="ECO:0007669"/>
    <property type="project" value="UniProtKB-SubCell"/>
</dbReference>
<dbReference type="GO" id="GO:0005783">
    <property type="term" value="C:endoplasmic reticulum"/>
    <property type="evidence" value="ECO:0007669"/>
    <property type="project" value="UniProtKB-SubCell"/>
</dbReference>
<dbReference type="GO" id="GO:0005794">
    <property type="term" value="C:Golgi apparatus"/>
    <property type="evidence" value="ECO:0007669"/>
    <property type="project" value="UniProtKB-SubCell"/>
</dbReference>
<dbReference type="GO" id="GO:0005634">
    <property type="term" value="C:nucleus"/>
    <property type="evidence" value="ECO:0007005"/>
    <property type="project" value="TAIR"/>
</dbReference>
<dbReference type="GO" id="GO:0005886">
    <property type="term" value="C:plasma membrane"/>
    <property type="evidence" value="ECO:0007669"/>
    <property type="project" value="UniProtKB-SubCell"/>
</dbReference>
<dbReference type="CDD" id="cd07607">
    <property type="entry name" value="BAR_SH3P_plant"/>
    <property type="match status" value="1"/>
</dbReference>
<dbReference type="FunFam" id="1.20.1270.60:FF:000077">
    <property type="entry name" value="SH3 domain-containing protein 1"/>
    <property type="match status" value="1"/>
</dbReference>
<dbReference type="FunFam" id="2.30.30.40:FF:000336">
    <property type="entry name" value="SH3 domain-containing protein 1"/>
    <property type="match status" value="1"/>
</dbReference>
<dbReference type="Gene3D" id="1.20.1270.60">
    <property type="entry name" value="Arfaptin homology (AH) domain/BAR domain"/>
    <property type="match status" value="1"/>
</dbReference>
<dbReference type="Gene3D" id="2.30.30.40">
    <property type="entry name" value="SH3 Domains"/>
    <property type="match status" value="1"/>
</dbReference>
<dbReference type="InterPro" id="IPR027267">
    <property type="entry name" value="AH/BAR_dom_sf"/>
</dbReference>
<dbReference type="InterPro" id="IPR050384">
    <property type="entry name" value="Endophilin_SH3RF"/>
</dbReference>
<dbReference type="InterPro" id="IPR036028">
    <property type="entry name" value="SH3-like_dom_sf"/>
</dbReference>
<dbReference type="InterPro" id="IPR001452">
    <property type="entry name" value="SH3_domain"/>
</dbReference>
<dbReference type="PANTHER" id="PTHR14167">
    <property type="entry name" value="SH3 DOMAIN-CONTAINING"/>
    <property type="match status" value="1"/>
</dbReference>
<dbReference type="PANTHER" id="PTHR14167:SF30">
    <property type="entry name" value="SH3 DOMAIN-CONTAINING PROTEIN 1"/>
    <property type="match status" value="1"/>
</dbReference>
<dbReference type="Pfam" id="PF14604">
    <property type="entry name" value="SH3_9"/>
    <property type="match status" value="1"/>
</dbReference>
<dbReference type="SMART" id="SM00326">
    <property type="entry name" value="SH3"/>
    <property type="match status" value="1"/>
</dbReference>
<dbReference type="SUPFAM" id="SSF103657">
    <property type="entry name" value="BAR/IMD domain-like"/>
    <property type="match status" value="1"/>
</dbReference>
<dbReference type="SUPFAM" id="SSF50044">
    <property type="entry name" value="SH3-domain"/>
    <property type="match status" value="1"/>
</dbReference>
<dbReference type="PROSITE" id="PS50002">
    <property type="entry name" value="SH3"/>
    <property type="match status" value="1"/>
</dbReference>
<gene>
    <name type="primary">SH3P1</name>
    <name evidence="5" type="ordered locus">At1g31440</name>
    <name evidence="6" type="ORF">T8E3.10</name>
</gene>
<proteinExistence type="evidence at protein level"/>
<accession>Q9C865</accession>
<name>SH3P1_ARATH</name>
<comment type="function">
    <text evidence="4">Lipid binding protein bound strongly to phosphatidic acid, phosphatidylinositol-4-phosphate and phosphatidylinositol-4,5-bisphosphate. Binds actin in vitro. Involved in trafficking and modification of clathrin-coated vesicles.</text>
</comment>
<comment type="subunit">
    <text evidence="4">Interacts with the auxilin-like protein AUXI1.</text>
</comment>
<comment type="subcellular location">
    <subcellularLocation>
        <location evidence="4">Cytoplasmic vesicle</location>
        <location evidence="4">Clathrin-coated vesicle</location>
    </subcellularLocation>
    <subcellularLocation>
        <location evidence="4">Cell membrane</location>
    </subcellularLocation>
    <subcellularLocation>
        <location evidence="4">Golgi apparatus</location>
        <location evidence="4">trans-Golgi network</location>
    </subcellularLocation>
    <subcellularLocation>
        <location evidence="4">Endoplasmic reticulum</location>
    </subcellularLocation>
    <subcellularLocation>
        <location evidence="4">Cytoplasmic vesicle</location>
    </subcellularLocation>
</comment>
<comment type="tissue specificity">
    <text evidence="4">Highly expressed in flowers. Detected in seedlings, roots, leaves and stems.</text>
</comment>